<keyword id="KW-0025">Alternative splicing</keyword>
<keyword id="KW-0049">Antioxidant</keyword>
<keyword id="KW-0963">Cytoplasm</keyword>
<keyword id="KW-0903">Direct protein sequencing</keyword>
<keyword id="KW-1267">Proteomics identification</keyword>
<keyword id="KW-0676">Redox-active center</keyword>
<keyword id="KW-1185">Reference proteome</keyword>
<keyword id="KW-0964">Secreted</keyword>
<feature type="chain" id="PRO_0000019550" description="Peroxiredoxin-like 2A">
    <location>
        <begin position="1"/>
        <end position="229"/>
    </location>
</feature>
<feature type="region of interest" description="Thioredoxin fold" evidence="1">
    <location>
        <begin position="14"/>
        <end position="112"/>
    </location>
</feature>
<feature type="active site" description="Redox-active" evidence="1">
    <location>
        <position position="85"/>
    </location>
</feature>
<feature type="active site" description="Redox-active" evidence="1">
    <location>
        <position position="88"/>
    </location>
</feature>
<feature type="splice variant" id="VSP_042229" description="In isoform 2." evidence="4">
    <location>
        <begin position="1"/>
        <end position="11"/>
    </location>
</feature>
<feature type="mutagenesis site" description="Decrease of about 38% in antioxidant activity in TNFSF11-stimulated osteoclasts and reduced inhibition of TNFSF11-induced osteoclast formation. Does not change anti-inflammatory properties." evidence="2 3">
    <original>C</original>
    <variation>G</variation>
    <location>
        <position position="85"/>
    </location>
</feature>
<feature type="mutagenesis site" description="Decrease of about 125% in antioxidant activity in TNFSF11-stimulated osteoclasts and reduced inhibition of TNFSF11-induced osteoclast formation." evidence="2">
    <original>C</original>
    <variation>G</variation>
    <location>
        <position position="88"/>
    </location>
</feature>
<feature type="sequence conflict" description="In Ref. 2; BAC11108." evidence="7" ref="2">
    <original>K</original>
    <variation>N</variation>
    <location>
        <position position="201"/>
    </location>
</feature>
<feature type="sequence conflict" description="In Ref. 3; BAC11627." evidence="7" ref="3">
    <original>K</original>
    <variation>R</variation>
    <location>
        <position position="206"/>
    </location>
</feature>
<proteinExistence type="evidence at protein level"/>
<organism>
    <name type="scientific">Homo sapiens</name>
    <name type="common">Human</name>
    <dbReference type="NCBI Taxonomy" id="9606"/>
    <lineage>
        <taxon>Eukaryota</taxon>
        <taxon>Metazoa</taxon>
        <taxon>Chordata</taxon>
        <taxon>Craniata</taxon>
        <taxon>Vertebrata</taxon>
        <taxon>Euteleostomi</taxon>
        <taxon>Mammalia</taxon>
        <taxon>Eutheria</taxon>
        <taxon>Euarchontoglires</taxon>
        <taxon>Primates</taxon>
        <taxon>Haplorrhini</taxon>
        <taxon>Catarrhini</taxon>
        <taxon>Hominidae</taxon>
        <taxon>Homo</taxon>
    </lineage>
</organism>
<protein>
    <recommendedName>
        <fullName evidence="7">Peroxiredoxin-like 2A</fullName>
    </recommendedName>
    <alternativeName>
        <fullName evidence="5 6">Peroxiredoxin-like 2 activated in M-CSF stimulated monocytes</fullName>
        <shortName evidence="5 6">Protein PAMM</shortName>
    </alternativeName>
    <alternativeName>
        <fullName>Redox-regulatory protein FAM213A</fullName>
    </alternativeName>
</protein>
<comment type="function">
    <text evidence="2 3">Involved in redox regulation of the cell (PubMed:19951071, PubMed:26438880). Acts as an antioxidant (PubMed:19951071, PubMed:26438880). Inhibits TNFSF11-induced NFKB1 and JUN activation and osteoclast differentiation (PubMed:19951071). May affect bone resorption and help to maintain bone mass (PubMed:19951071). Acts as a negative regulator of macrophage-mediated inflammation by inhibiting macrophage production of inflammatory cytokines, probably through suppression of the MAPK signaling pathway (PubMed:26438880).</text>
</comment>
<comment type="subcellular location">
    <subcellularLocation>
        <location evidence="2">Cytoplasm</location>
    </subcellularLocation>
    <subcellularLocation>
        <location evidence="3">Secreted</location>
    </subcellularLocation>
    <text evidence="3">Secreted from mature adipocytes but not from preadipocytes.</text>
</comment>
<comment type="alternative products">
    <event type="alternative splicing"/>
    <isoform>
        <id>Q9BRX8-1</id>
        <name>1</name>
        <sequence type="displayed"/>
    </isoform>
    <isoform>
        <id>Q9BRX8-2</id>
        <name>2</name>
        <sequence type="described" ref="VSP_042229"/>
    </isoform>
</comment>
<comment type="tissue specificity">
    <text evidence="2">Expressed in CSF1 and TNFSF11-stimulated CD14(+) peripheral blood mononuclear cells (PBMCs).</text>
</comment>
<comment type="induction">
    <text evidence="2">Up-regulated by CSF1 in peripheral blood mononuclear cells (PBMCs). This induction is reduced in the presence of TNFSF11.</text>
</comment>
<comment type="miscellaneous">
    <text>The active site cysteines correspond to the redox-active cysteines of peroxiredoxins.</text>
</comment>
<comment type="similarity">
    <text evidence="7">Belongs to the peroxiredoxin-like PRXL2 family. PRXL2A subfamily.</text>
</comment>
<comment type="sequence caution" evidence="7">
    <conflict type="erroneous initiation">
        <sequence resource="EMBL-CDS" id="AAK55527"/>
    </conflict>
    <text>Truncated N-terminus.</text>
</comment>
<comment type="sequence caution" evidence="7">
    <conflict type="erroneous initiation">
        <sequence resource="EMBL-CDS" id="BAG37828"/>
    </conflict>
    <text>Truncated N-terminus.</text>
</comment>
<name>PXL2A_HUMAN</name>
<evidence type="ECO:0000250" key="1"/>
<evidence type="ECO:0000269" key="2">
    <source>
    </source>
</evidence>
<evidence type="ECO:0000269" key="3">
    <source>
    </source>
</evidence>
<evidence type="ECO:0000303" key="4">
    <source>
    </source>
</evidence>
<evidence type="ECO:0000303" key="5">
    <source>
    </source>
</evidence>
<evidence type="ECO:0000303" key="6">
    <source>
    </source>
</evidence>
<evidence type="ECO:0000305" key="7"/>
<evidence type="ECO:0000312" key="8">
    <source>
        <dbReference type="HGNC" id="HGNC:28651"/>
    </source>
</evidence>
<reference key="1">
    <citation type="journal article" date="2003" name="Genome Res.">
        <title>The secreted protein discovery initiative (SPDI), a large-scale effort to identify novel human secreted and transmembrane proteins: a bioinformatics assessment.</title>
        <authorList>
            <person name="Clark H.F."/>
            <person name="Gurney A.L."/>
            <person name="Abaya E."/>
            <person name="Baker K."/>
            <person name="Baldwin D.T."/>
            <person name="Brush J."/>
            <person name="Chen J."/>
            <person name="Chow B."/>
            <person name="Chui C."/>
            <person name="Crowley C."/>
            <person name="Currell B."/>
            <person name="Deuel B."/>
            <person name="Dowd P."/>
            <person name="Eaton D."/>
            <person name="Foster J.S."/>
            <person name="Grimaldi C."/>
            <person name="Gu Q."/>
            <person name="Hass P.E."/>
            <person name="Heldens S."/>
            <person name="Huang A."/>
            <person name="Kim H.S."/>
            <person name="Klimowski L."/>
            <person name="Jin Y."/>
            <person name="Johnson S."/>
            <person name="Lee J."/>
            <person name="Lewis L."/>
            <person name="Liao D."/>
            <person name="Mark M.R."/>
            <person name="Robbie E."/>
            <person name="Sanchez C."/>
            <person name="Schoenfeld J."/>
            <person name="Seshagiri S."/>
            <person name="Simmons L."/>
            <person name="Singh J."/>
            <person name="Smith V."/>
            <person name="Stinson J."/>
            <person name="Vagts A."/>
            <person name="Vandlen R.L."/>
            <person name="Watanabe C."/>
            <person name="Wieand D."/>
            <person name="Woods K."/>
            <person name="Xie M.-H."/>
            <person name="Yansura D.G."/>
            <person name="Yi S."/>
            <person name="Yu G."/>
            <person name="Yuan J."/>
            <person name="Zhang M."/>
            <person name="Zhang Z."/>
            <person name="Goddard A.D."/>
            <person name="Wood W.I."/>
            <person name="Godowski P.J."/>
            <person name="Gray A.M."/>
        </authorList>
    </citation>
    <scope>NUCLEOTIDE SEQUENCE [LARGE SCALE MRNA] (ISOFORM 1)</scope>
</reference>
<reference key="2">
    <citation type="journal article" date="2004" name="Nat. Genet.">
        <title>Complete sequencing and characterization of 21,243 full-length human cDNAs.</title>
        <authorList>
            <person name="Ota T."/>
            <person name="Suzuki Y."/>
            <person name="Nishikawa T."/>
            <person name="Otsuki T."/>
            <person name="Sugiyama T."/>
            <person name="Irie R."/>
            <person name="Wakamatsu A."/>
            <person name="Hayashi K."/>
            <person name="Sato H."/>
            <person name="Nagai K."/>
            <person name="Kimura K."/>
            <person name="Makita H."/>
            <person name="Sekine M."/>
            <person name="Obayashi M."/>
            <person name="Nishi T."/>
            <person name="Shibahara T."/>
            <person name="Tanaka T."/>
            <person name="Ishii S."/>
            <person name="Yamamoto J."/>
            <person name="Saito K."/>
            <person name="Kawai Y."/>
            <person name="Isono Y."/>
            <person name="Nakamura Y."/>
            <person name="Nagahari K."/>
            <person name="Murakami K."/>
            <person name="Yasuda T."/>
            <person name="Iwayanagi T."/>
            <person name="Wagatsuma M."/>
            <person name="Shiratori A."/>
            <person name="Sudo H."/>
            <person name="Hosoiri T."/>
            <person name="Kaku Y."/>
            <person name="Kodaira H."/>
            <person name="Kondo H."/>
            <person name="Sugawara M."/>
            <person name="Takahashi M."/>
            <person name="Kanda K."/>
            <person name="Yokoi T."/>
            <person name="Furuya T."/>
            <person name="Kikkawa E."/>
            <person name="Omura Y."/>
            <person name="Abe K."/>
            <person name="Kamihara K."/>
            <person name="Katsuta N."/>
            <person name="Sato K."/>
            <person name="Tanikawa M."/>
            <person name="Yamazaki M."/>
            <person name="Ninomiya K."/>
            <person name="Ishibashi T."/>
            <person name="Yamashita H."/>
            <person name="Murakawa K."/>
            <person name="Fujimori K."/>
            <person name="Tanai H."/>
            <person name="Kimata M."/>
            <person name="Watanabe M."/>
            <person name="Hiraoka S."/>
            <person name="Chiba Y."/>
            <person name="Ishida S."/>
            <person name="Ono Y."/>
            <person name="Takiguchi S."/>
            <person name="Watanabe S."/>
            <person name="Yosida M."/>
            <person name="Hotuta T."/>
            <person name="Kusano J."/>
            <person name="Kanehori K."/>
            <person name="Takahashi-Fujii A."/>
            <person name="Hara H."/>
            <person name="Tanase T.-O."/>
            <person name="Nomura Y."/>
            <person name="Togiya S."/>
            <person name="Komai F."/>
            <person name="Hara R."/>
            <person name="Takeuchi K."/>
            <person name="Arita M."/>
            <person name="Imose N."/>
            <person name="Musashino K."/>
            <person name="Yuuki H."/>
            <person name="Oshima A."/>
            <person name="Sasaki N."/>
            <person name="Aotsuka S."/>
            <person name="Yoshikawa Y."/>
            <person name="Matsunawa H."/>
            <person name="Ichihara T."/>
            <person name="Shiohata N."/>
            <person name="Sano S."/>
            <person name="Moriya S."/>
            <person name="Momiyama H."/>
            <person name="Satoh N."/>
            <person name="Takami S."/>
            <person name="Terashima Y."/>
            <person name="Suzuki O."/>
            <person name="Nakagawa S."/>
            <person name="Senoh A."/>
            <person name="Mizoguchi H."/>
            <person name="Goto Y."/>
            <person name="Shimizu F."/>
            <person name="Wakebe H."/>
            <person name="Hishigaki H."/>
            <person name="Watanabe T."/>
            <person name="Sugiyama A."/>
            <person name="Takemoto M."/>
            <person name="Kawakami B."/>
            <person name="Yamazaki M."/>
            <person name="Watanabe K."/>
            <person name="Kumagai A."/>
            <person name="Itakura S."/>
            <person name="Fukuzumi Y."/>
            <person name="Fujimori Y."/>
            <person name="Komiyama M."/>
            <person name="Tashiro H."/>
            <person name="Tanigami A."/>
            <person name="Fujiwara T."/>
            <person name="Ono T."/>
            <person name="Yamada K."/>
            <person name="Fujii Y."/>
            <person name="Ozaki K."/>
            <person name="Hirao M."/>
            <person name="Ohmori Y."/>
            <person name="Kawabata A."/>
            <person name="Hikiji T."/>
            <person name="Kobatake N."/>
            <person name="Inagaki H."/>
            <person name="Ikema Y."/>
            <person name="Okamoto S."/>
            <person name="Okitani R."/>
            <person name="Kawakami T."/>
            <person name="Noguchi S."/>
            <person name="Itoh T."/>
            <person name="Shigeta K."/>
            <person name="Senba T."/>
            <person name="Matsumura K."/>
            <person name="Nakajima Y."/>
            <person name="Mizuno T."/>
            <person name="Morinaga M."/>
            <person name="Sasaki M."/>
            <person name="Togashi T."/>
            <person name="Oyama M."/>
            <person name="Hata H."/>
            <person name="Watanabe M."/>
            <person name="Komatsu T."/>
            <person name="Mizushima-Sugano J."/>
            <person name="Satoh T."/>
            <person name="Shirai Y."/>
            <person name="Takahashi Y."/>
            <person name="Nakagawa K."/>
            <person name="Okumura K."/>
            <person name="Nagase T."/>
            <person name="Nomura N."/>
            <person name="Kikuchi H."/>
            <person name="Masuho Y."/>
            <person name="Yamashita R."/>
            <person name="Nakai K."/>
            <person name="Yada T."/>
            <person name="Nakamura Y."/>
            <person name="Ohara O."/>
            <person name="Isogai T."/>
            <person name="Sugano S."/>
        </authorList>
    </citation>
    <scope>NUCLEOTIDE SEQUENCE [LARGE SCALE MRNA] (ISOFORM 1)</scope>
    <source>
        <tissue>Embryo</tissue>
        <tissue>Heart</tissue>
    </source>
</reference>
<reference key="3">
    <citation type="journal article" date="2005" name="DNA Res.">
        <title>Signal sequence and keyword trap in silico for selection of full-length human cDNAs encoding secretion or membrane proteins from oligo-capped cDNA libraries.</title>
        <authorList>
            <person name="Otsuki T."/>
            <person name="Ota T."/>
            <person name="Nishikawa T."/>
            <person name="Hayashi K."/>
            <person name="Suzuki Y."/>
            <person name="Yamamoto J."/>
            <person name="Wakamatsu A."/>
            <person name="Kimura K."/>
            <person name="Sakamoto K."/>
            <person name="Hatano N."/>
            <person name="Kawai Y."/>
            <person name="Ishii S."/>
            <person name="Saito K."/>
            <person name="Kojima S."/>
            <person name="Sugiyama T."/>
            <person name="Ono T."/>
            <person name="Okano K."/>
            <person name="Yoshikawa Y."/>
            <person name="Aotsuka S."/>
            <person name="Sasaki N."/>
            <person name="Hattori A."/>
            <person name="Okumura K."/>
            <person name="Nagai K."/>
            <person name="Sugano S."/>
            <person name="Isogai T."/>
        </authorList>
    </citation>
    <scope>NUCLEOTIDE SEQUENCE [LARGE SCALE MRNA] (ISOFORMS 1 AND 2)</scope>
    <source>
        <tissue>Placenta</tissue>
    </source>
</reference>
<reference key="4">
    <citation type="journal article" date="2004" name="Nature">
        <title>The DNA sequence and comparative analysis of human chromosome 10.</title>
        <authorList>
            <person name="Deloukas P."/>
            <person name="Earthrowl M.E."/>
            <person name="Grafham D.V."/>
            <person name="Rubenfield M."/>
            <person name="French L."/>
            <person name="Steward C.A."/>
            <person name="Sims S.K."/>
            <person name="Jones M.C."/>
            <person name="Searle S."/>
            <person name="Scott C."/>
            <person name="Howe K."/>
            <person name="Hunt S.E."/>
            <person name="Andrews T.D."/>
            <person name="Gilbert J.G.R."/>
            <person name="Swarbreck D."/>
            <person name="Ashurst J.L."/>
            <person name="Taylor A."/>
            <person name="Battles J."/>
            <person name="Bird C.P."/>
            <person name="Ainscough R."/>
            <person name="Almeida J.P."/>
            <person name="Ashwell R.I.S."/>
            <person name="Ambrose K.D."/>
            <person name="Babbage A.K."/>
            <person name="Bagguley C.L."/>
            <person name="Bailey J."/>
            <person name="Banerjee R."/>
            <person name="Bates K."/>
            <person name="Beasley H."/>
            <person name="Bray-Allen S."/>
            <person name="Brown A.J."/>
            <person name="Brown J.Y."/>
            <person name="Burford D.C."/>
            <person name="Burrill W."/>
            <person name="Burton J."/>
            <person name="Cahill P."/>
            <person name="Camire D."/>
            <person name="Carter N.P."/>
            <person name="Chapman J.C."/>
            <person name="Clark S.Y."/>
            <person name="Clarke G."/>
            <person name="Clee C.M."/>
            <person name="Clegg S."/>
            <person name="Corby N."/>
            <person name="Coulson A."/>
            <person name="Dhami P."/>
            <person name="Dutta I."/>
            <person name="Dunn M."/>
            <person name="Faulkner L."/>
            <person name="Frankish A."/>
            <person name="Frankland J.A."/>
            <person name="Garner P."/>
            <person name="Garnett J."/>
            <person name="Gribble S."/>
            <person name="Griffiths C."/>
            <person name="Grocock R."/>
            <person name="Gustafson E."/>
            <person name="Hammond S."/>
            <person name="Harley J.L."/>
            <person name="Hart E."/>
            <person name="Heath P.D."/>
            <person name="Ho T.P."/>
            <person name="Hopkins B."/>
            <person name="Horne J."/>
            <person name="Howden P.J."/>
            <person name="Huckle E."/>
            <person name="Hynds C."/>
            <person name="Johnson C."/>
            <person name="Johnson D."/>
            <person name="Kana A."/>
            <person name="Kay M."/>
            <person name="Kimberley A.M."/>
            <person name="Kershaw J.K."/>
            <person name="Kokkinaki M."/>
            <person name="Laird G.K."/>
            <person name="Lawlor S."/>
            <person name="Lee H.M."/>
            <person name="Leongamornlert D.A."/>
            <person name="Laird G."/>
            <person name="Lloyd C."/>
            <person name="Lloyd D.M."/>
            <person name="Loveland J."/>
            <person name="Lovell J."/>
            <person name="McLaren S."/>
            <person name="McLay K.E."/>
            <person name="McMurray A."/>
            <person name="Mashreghi-Mohammadi M."/>
            <person name="Matthews L."/>
            <person name="Milne S."/>
            <person name="Nickerson T."/>
            <person name="Nguyen M."/>
            <person name="Overton-Larty E."/>
            <person name="Palmer S.A."/>
            <person name="Pearce A.V."/>
            <person name="Peck A.I."/>
            <person name="Pelan S."/>
            <person name="Phillimore B."/>
            <person name="Porter K."/>
            <person name="Rice C.M."/>
            <person name="Rogosin A."/>
            <person name="Ross M.T."/>
            <person name="Sarafidou T."/>
            <person name="Sehra H.K."/>
            <person name="Shownkeen R."/>
            <person name="Skuce C.D."/>
            <person name="Smith M."/>
            <person name="Standring L."/>
            <person name="Sycamore N."/>
            <person name="Tester J."/>
            <person name="Thorpe A."/>
            <person name="Torcasso W."/>
            <person name="Tracey A."/>
            <person name="Tromans A."/>
            <person name="Tsolas J."/>
            <person name="Wall M."/>
            <person name="Walsh J."/>
            <person name="Wang H."/>
            <person name="Weinstock K."/>
            <person name="West A.P."/>
            <person name="Willey D.L."/>
            <person name="Whitehead S.L."/>
            <person name="Wilming L."/>
            <person name="Wray P.W."/>
            <person name="Young L."/>
            <person name="Chen Y."/>
            <person name="Lovering R.C."/>
            <person name="Moschonas N.K."/>
            <person name="Siebert R."/>
            <person name="Fechtel K."/>
            <person name="Bentley D."/>
            <person name="Durbin R.M."/>
            <person name="Hubbard T."/>
            <person name="Doucette-Stamm L."/>
            <person name="Beck S."/>
            <person name="Smith D.R."/>
            <person name="Rogers J."/>
        </authorList>
    </citation>
    <scope>NUCLEOTIDE SEQUENCE [LARGE SCALE GENOMIC DNA]</scope>
</reference>
<reference key="5">
    <citation type="journal article" date="2004" name="Genome Res.">
        <title>The status, quality, and expansion of the NIH full-length cDNA project: the Mammalian Gene Collection (MGC).</title>
        <authorList>
            <consortium name="The MGC Project Team"/>
        </authorList>
    </citation>
    <scope>NUCLEOTIDE SEQUENCE [LARGE SCALE MRNA] (ISOFORM 1)</scope>
    <source>
        <tissue>Muscle</tissue>
    </source>
</reference>
<reference key="6">
    <citation type="journal article" date="2001" name="Genome Res.">
        <title>Gene expression profiling in human fetal liver and identification of tissue- and developmental-stage-specific genes through compiled expression profiles and efficient cloning of full-length cDNAs.</title>
        <authorList>
            <person name="Yu Y."/>
            <person name="Zhang C."/>
            <person name="Zhou G."/>
            <person name="Wu S."/>
            <person name="Qu X."/>
            <person name="Wei H."/>
            <person name="Xing G."/>
            <person name="Dong C."/>
            <person name="Zhai Y."/>
            <person name="Wan J."/>
            <person name="Ouyang S."/>
            <person name="Li L."/>
            <person name="Zhang S."/>
            <person name="Zhou K."/>
            <person name="Zhang Y."/>
            <person name="Wu C."/>
            <person name="He F."/>
        </authorList>
    </citation>
    <scope>NUCLEOTIDE SEQUENCE [LARGE SCALE MRNA] OF 63-229 (ISOFORMS 1/2)</scope>
    <source>
        <tissue>Fetal liver</tissue>
    </source>
</reference>
<reference key="7">
    <citation type="submission" date="2005-06" db="UniProtKB">
        <authorList>
            <person name="Bienvenut W.V."/>
        </authorList>
    </citation>
    <scope>PROTEIN SEQUENCE OF 90-99; 156-164 AND 192-199</scope>
    <scope>IDENTIFICATION BY MASS SPECTROMETRY</scope>
    <source>
        <tissue>B-cell lymphoma</tissue>
    </source>
</reference>
<reference key="8">
    <citation type="journal article" date="2010" name="Antioxid. Redox Signal.">
        <title>PAMM: a redox regulatory protein that modulates osteoclast differentiation.</title>
        <authorList>
            <person name="Xu Y."/>
            <person name="Morse L.R."/>
            <person name="da Silva R.A."/>
            <person name="Odgren P.R."/>
            <person name="Sasaki H."/>
            <person name="Stashenko P."/>
            <person name="Battaglino R.A."/>
        </authorList>
    </citation>
    <scope>FUNCTION</scope>
    <scope>SUBCELLULAR LOCATION</scope>
    <scope>INDUCTION BY CSF1 AND TNFSF11</scope>
    <scope>TISSUE SPECIFICITY</scope>
    <scope>MUTAGENESIS OF CYS-85 AND CYS-88</scope>
</reference>
<reference key="9">
    <citation type="journal article" date="2011" name="BMC Syst. Biol.">
        <title>Initial characterization of the human central proteome.</title>
        <authorList>
            <person name="Burkard T.R."/>
            <person name="Planyavsky M."/>
            <person name="Kaupe I."/>
            <person name="Breitwieser F.P."/>
            <person name="Buerckstuemmer T."/>
            <person name="Bennett K.L."/>
            <person name="Superti-Furga G."/>
            <person name="Colinge J."/>
        </authorList>
    </citation>
    <scope>IDENTIFICATION BY MASS SPECTROMETRY [LARGE SCALE ANALYSIS]</scope>
</reference>
<reference key="10">
    <citation type="journal article" date="2014" name="J. Proteomics">
        <title>An enzyme assisted RP-RPLC approach for in-depth analysis of human liver phosphoproteome.</title>
        <authorList>
            <person name="Bian Y."/>
            <person name="Song C."/>
            <person name="Cheng K."/>
            <person name="Dong M."/>
            <person name="Wang F."/>
            <person name="Huang J."/>
            <person name="Sun D."/>
            <person name="Wang L."/>
            <person name="Ye M."/>
            <person name="Zou H."/>
        </authorList>
    </citation>
    <scope>IDENTIFICATION BY MASS SPECTROMETRY [LARGE SCALE ANALYSIS]</scope>
    <source>
        <tissue>Liver</tissue>
    </source>
</reference>
<reference key="11">
    <citation type="journal article" date="2015" name="Biochem. J.">
        <title>Adipocyte-derived PAMM suppresses macrophage inflammation by inhibiting MAPK signalling.</title>
        <authorList>
            <person name="Guo F."/>
            <person name="He H."/>
            <person name="Fu Z.C."/>
            <person name="Huang S."/>
            <person name="Chen T."/>
            <person name="Papasian C.J."/>
            <person name="Morse L.R."/>
            <person name="Xu Y."/>
            <person name="Battaglino R.A."/>
            <person name="Yang X.F."/>
            <person name="Jiang Z."/>
            <person name="Xin H.B."/>
            <person name="Fu M."/>
        </authorList>
    </citation>
    <scope>FUNCTION</scope>
    <scope>SUBCELLULAR LOCATION</scope>
    <scope>MUTAGENESIS OF CYS-88</scope>
</reference>
<sequence length="229" mass="25764">MSFLQDPSFFTMGMWSIGAGALGAAALALLLANTDVFLSKPQKAALEYLEDIDLKTLEKEPRTFKAKELWEKNGAVIMAVRRPGCFLCREEAADLSSLKSMLDQLGVPLYAVVKEHIRTEVKDFQPYFKGEIFLDEKKKFYGPQRRKMMFMGFIRLGVWYNFFRAWNGGFSGNLEGEGFILGGVFVVGSGKQGILLEHREKEFGDKVNLLSVLEAAKMIKPQTLASEKK</sequence>
<dbReference type="EMBL" id="AY359059">
    <property type="protein sequence ID" value="AAQ89418.1"/>
    <property type="molecule type" value="mRNA"/>
</dbReference>
<dbReference type="EMBL" id="AK315440">
    <property type="protein sequence ID" value="BAG37828.1"/>
    <property type="status" value="ALT_INIT"/>
    <property type="molecule type" value="mRNA"/>
</dbReference>
<dbReference type="EMBL" id="AK074643">
    <property type="protein sequence ID" value="BAC11108.1"/>
    <property type="molecule type" value="mRNA"/>
</dbReference>
<dbReference type="EMBL" id="AK075447">
    <property type="protein sequence ID" value="BAC11627.1"/>
    <property type="molecule type" value="mRNA"/>
</dbReference>
<dbReference type="EMBL" id="AC021028">
    <property type="status" value="NOT_ANNOTATED_CDS"/>
    <property type="molecule type" value="Genomic_DNA"/>
</dbReference>
<dbReference type="EMBL" id="BC005871">
    <property type="protein sequence ID" value="AAH05871.3"/>
    <property type="molecule type" value="mRNA"/>
</dbReference>
<dbReference type="EMBL" id="AF305824">
    <property type="protein sequence ID" value="AAK55527.1"/>
    <property type="status" value="ALT_INIT"/>
    <property type="molecule type" value="mRNA"/>
</dbReference>
<dbReference type="CCDS" id="CCDS58089.1">
    <molecule id="Q9BRX8-2"/>
</dbReference>
<dbReference type="CCDS" id="CCDS7368.1">
    <molecule id="Q9BRX8-1"/>
</dbReference>
<dbReference type="RefSeq" id="NP_001230707.1">
    <molecule id="Q9BRX8-1"/>
    <property type="nucleotide sequence ID" value="NM_001243778.2"/>
</dbReference>
<dbReference type="RefSeq" id="NP_001230708.1">
    <molecule id="Q9BRX8-1"/>
    <property type="nucleotide sequence ID" value="NM_001243779.2"/>
</dbReference>
<dbReference type="RefSeq" id="NP_001230709.1">
    <molecule id="Q9BRX8-1"/>
    <property type="nucleotide sequence ID" value="NM_001243780.2"/>
</dbReference>
<dbReference type="RefSeq" id="NP_001230710.1">
    <molecule id="Q9BRX8-2"/>
    <property type="nucleotide sequence ID" value="NM_001243781.2"/>
</dbReference>
<dbReference type="RefSeq" id="NP_001230711.1">
    <property type="nucleotide sequence ID" value="NM_001243782.1"/>
</dbReference>
<dbReference type="RefSeq" id="NP_115709.3">
    <molecule id="Q9BRX8-1"/>
    <property type="nucleotide sequence ID" value="NM_032333.4"/>
</dbReference>
<dbReference type="RefSeq" id="XP_011538567.1">
    <molecule id="Q9BRX8-1"/>
    <property type="nucleotide sequence ID" value="XM_011540265.3"/>
</dbReference>
<dbReference type="RefSeq" id="XP_011538568.1">
    <molecule id="Q9BRX8-1"/>
    <property type="nucleotide sequence ID" value="XM_011540266.3"/>
</dbReference>
<dbReference type="RefSeq" id="XP_054222903.1">
    <molecule id="Q9BRX8-1"/>
    <property type="nucleotide sequence ID" value="XM_054366928.1"/>
</dbReference>
<dbReference type="RefSeq" id="XP_054222904.1">
    <molecule id="Q9BRX8-1"/>
    <property type="nucleotide sequence ID" value="XM_054366929.1"/>
</dbReference>
<dbReference type="SMR" id="Q9BRX8"/>
<dbReference type="BioGRID" id="124020">
    <property type="interactions" value="101"/>
</dbReference>
<dbReference type="FunCoup" id="Q9BRX8">
    <property type="interactions" value="1058"/>
</dbReference>
<dbReference type="IntAct" id="Q9BRX8">
    <property type="interactions" value="77"/>
</dbReference>
<dbReference type="MINT" id="Q9BRX8"/>
<dbReference type="STRING" id="9606.ENSP00000482445"/>
<dbReference type="BindingDB" id="Q9BRX8"/>
<dbReference type="ChEMBL" id="CHEMBL3879824"/>
<dbReference type="DrugCentral" id="Q9BRX8"/>
<dbReference type="iPTMnet" id="Q9BRX8"/>
<dbReference type="PhosphoSitePlus" id="Q9BRX8"/>
<dbReference type="SwissPalm" id="Q9BRX8"/>
<dbReference type="BioMuta" id="FAM213A"/>
<dbReference type="DMDM" id="73620080"/>
<dbReference type="jPOST" id="Q9BRX8"/>
<dbReference type="MassIVE" id="Q9BRX8"/>
<dbReference type="PaxDb" id="9606-ENSP00000482445"/>
<dbReference type="PeptideAtlas" id="Q9BRX8"/>
<dbReference type="PRIDE" id="Q9BRX8"/>
<dbReference type="ProteomicsDB" id="78849">
    <molecule id="Q9BRX8-1"/>
</dbReference>
<dbReference type="ProteomicsDB" id="78850">
    <molecule id="Q9BRX8-2"/>
</dbReference>
<dbReference type="Pumba" id="Q9BRX8"/>
<dbReference type="Antibodypedia" id="2394">
    <property type="antibodies" value="76 antibodies from 17 providers"/>
</dbReference>
<dbReference type="DNASU" id="84293"/>
<dbReference type="Ensembl" id="ENST00000372181.1">
    <molecule id="Q9BRX8-1"/>
    <property type="protein sequence ID" value="ENSP00000361254.1"/>
    <property type="gene ID" value="ENSG00000122378.14"/>
</dbReference>
<dbReference type="Ensembl" id="ENST00000372185.5">
    <molecule id="Q9BRX8-2"/>
    <property type="protein sequence ID" value="ENSP00000361259.1"/>
    <property type="gene ID" value="ENSG00000122378.14"/>
</dbReference>
<dbReference type="Ensembl" id="ENST00000372187.9">
    <molecule id="Q9BRX8-1"/>
    <property type="protein sequence ID" value="ENSP00000361261.5"/>
    <property type="gene ID" value="ENSG00000122378.14"/>
</dbReference>
<dbReference type="Ensembl" id="ENST00000372188.5">
    <molecule id="Q9BRX8-1"/>
    <property type="protein sequence ID" value="ENSP00000361262.1"/>
    <property type="gene ID" value="ENSG00000122378.14"/>
</dbReference>
<dbReference type="Ensembl" id="ENST00000606162.6">
    <molecule id="Q9BRX8-1"/>
    <property type="protein sequence ID" value="ENSP00000482445.1"/>
    <property type="gene ID" value="ENSG00000122378.14"/>
</dbReference>
<dbReference type="Ensembl" id="ENST00000615554.4">
    <molecule id="Q9BRX8-1"/>
    <property type="protein sequence ID" value="ENSP00000478152.1"/>
    <property type="gene ID" value="ENSG00000122378.14"/>
</dbReference>
<dbReference type="GeneID" id="84293"/>
<dbReference type="KEGG" id="hsa:84293"/>
<dbReference type="MANE-Select" id="ENST00000606162.6">
    <property type="protein sequence ID" value="ENSP00000482445.1"/>
    <property type="RefSeq nucleotide sequence ID" value="NM_032333.5"/>
    <property type="RefSeq protein sequence ID" value="NP_115709.3"/>
</dbReference>
<dbReference type="UCSC" id="uc001kcc.5">
    <molecule id="Q9BRX8-1"/>
    <property type="organism name" value="human"/>
</dbReference>
<dbReference type="AGR" id="HGNC:28651"/>
<dbReference type="CTD" id="84293"/>
<dbReference type="DisGeNET" id="84293"/>
<dbReference type="GeneCards" id="PRXL2A"/>
<dbReference type="HGNC" id="HGNC:28651">
    <property type="gene designation" value="PRXL2A"/>
</dbReference>
<dbReference type="HPA" id="ENSG00000122378">
    <property type="expression patterns" value="Tissue enhanced (adipose)"/>
</dbReference>
<dbReference type="MIM" id="617165">
    <property type="type" value="gene"/>
</dbReference>
<dbReference type="neXtProt" id="NX_Q9BRX8"/>
<dbReference type="OpenTargets" id="ENSG00000122378"/>
<dbReference type="PharmGKB" id="PA134969403"/>
<dbReference type="VEuPathDB" id="HostDB:ENSG00000122378"/>
<dbReference type="eggNOG" id="KOG4498">
    <property type="taxonomic scope" value="Eukaryota"/>
</dbReference>
<dbReference type="GeneTree" id="ENSGT00940000161199"/>
<dbReference type="HOGENOM" id="CLU_086062_0_0_1"/>
<dbReference type="InParanoid" id="Q9BRX8"/>
<dbReference type="OMA" id="SMGMWSL"/>
<dbReference type="OrthoDB" id="40334at2759"/>
<dbReference type="PAN-GO" id="Q9BRX8">
    <property type="GO annotations" value="2 GO annotations based on evolutionary models"/>
</dbReference>
<dbReference type="PhylomeDB" id="Q9BRX8"/>
<dbReference type="TreeFam" id="TF313804"/>
<dbReference type="PathwayCommons" id="Q9BRX8"/>
<dbReference type="SignaLink" id="Q9BRX8"/>
<dbReference type="BioGRID-ORCS" id="84293">
    <property type="hits" value="15 hits in 1156 CRISPR screens"/>
</dbReference>
<dbReference type="ChiTaRS" id="FAM213A">
    <property type="organism name" value="human"/>
</dbReference>
<dbReference type="GeneWiki" id="C10orf58"/>
<dbReference type="GenomeRNAi" id="84293"/>
<dbReference type="Pharos" id="Q9BRX8">
    <property type="development level" value="Tchem"/>
</dbReference>
<dbReference type="PRO" id="PR:Q9BRX8"/>
<dbReference type="Proteomes" id="UP000005640">
    <property type="component" value="Chromosome 10"/>
</dbReference>
<dbReference type="RNAct" id="Q9BRX8">
    <property type="molecule type" value="protein"/>
</dbReference>
<dbReference type="Bgee" id="ENSG00000122378">
    <property type="expression patterns" value="Expressed in pigmented layer of retina and 192 other cell types or tissues"/>
</dbReference>
<dbReference type="GO" id="GO:0005737">
    <property type="term" value="C:cytoplasm"/>
    <property type="evidence" value="ECO:0000314"/>
    <property type="project" value="UniProtKB"/>
</dbReference>
<dbReference type="GO" id="GO:0005576">
    <property type="term" value="C:extracellular region"/>
    <property type="evidence" value="ECO:0007669"/>
    <property type="project" value="UniProtKB-SubCell"/>
</dbReference>
<dbReference type="GO" id="GO:0016209">
    <property type="term" value="F:antioxidant activity"/>
    <property type="evidence" value="ECO:0000314"/>
    <property type="project" value="UniProtKB"/>
</dbReference>
<dbReference type="GO" id="GO:0045670">
    <property type="term" value="P:regulation of osteoclast differentiation"/>
    <property type="evidence" value="ECO:0000314"/>
    <property type="project" value="UniProtKB"/>
</dbReference>
<dbReference type="CDD" id="cd02970">
    <property type="entry name" value="PRX_like2"/>
    <property type="match status" value="1"/>
</dbReference>
<dbReference type="FunFam" id="3.40.30.10:FF:000312">
    <property type="entry name" value="redox-regulatory protein FAM213A isoform X1"/>
    <property type="match status" value="1"/>
</dbReference>
<dbReference type="InterPro" id="IPR032801">
    <property type="entry name" value="PXL2A/B/C"/>
</dbReference>
<dbReference type="PANTHER" id="PTHR28630">
    <property type="match status" value="1"/>
</dbReference>
<dbReference type="PANTHER" id="PTHR28630:SF31">
    <property type="entry name" value="PEROXIREDOXIN-LIKE 2A"/>
    <property type="match status" value="1"/>
</dbReference>
<dbReference type="Pfam" id="PF13911">
    <property type="entry name" value="AhpC-TSA_2"/>
    <property type="match status" value="1"/>
</dbReference>
<gene>
    <name evidence="8" type="primary">PRXL2A</name>
    <name type="synonym">C10orf58</name>
    <name type="synonym">FAM213A</name>
    <name evidence="5 6" type="synonym">PAMM</name>
    <name type="ORF">PRO2290</name>
    <name type="ORF">PSEC0139</name>
    <name type="ORF">UNQ611/PRO1198</name>
</gene>
<accession>Q9BRX8</accession>
<accession>B2RD81</accession>
<accession>Q6UW08</accession>
<accession>Q8N2K3</accession>
<accession>Q8NBK9</accession>
<accession>Q96JR0</accession>